<proteinExistence type="evidence at protein level"/>
<gene>
    <name type="primary">Tafa5</name>
    <name evidence="9" type="synonym">Fam19a5</name>
</gene>
<sequence length="132" mass="14331">MAPSPRTSSRQDATALPSMSSTFWAFMILASLLIAYCSQLAAGTCEIVTLDRDSSQPRRTIARQTARCACRKGQIAGTTRARPACVDARIIKTKQWCDMLPCLEGEGCDLLINRSGWTCTQPGGRIKTTTVS</sequence>
<feature type="signal peptide" evidence="2">
    <location>
        <begin position="1"/>
        <end position="43"/>
    </location>
</feature>
<feature type="chain" id="PRO_0000042733" description="Chemokine-like protein TAFA-5" evidence="2">
    <location>
        <begin position="44"/>
        <end position="132"/>
    </location>
</feature>
<feature type="glycosylation site" description="N-linked (GlcNAc...) asparagine" evidence="3">
    <location>
        <position position="113"/>
    </location>
</feature>
<feature type="splice variant" id="VSP_016069" description="In isoform 2." evidence="6 7">
    <original>MAPSPRTSSRQDATALPSMSSTFWAFMILASLLIAYCS</original>
    <variation>MQLLKALWALAGAALCCFLVLVIHAQFLKEG</variation>
    <location>
        <begin position="1"/>
        <end position="38"/>
    </location>
</feature>
<reference key="1">
    <citation type="journal article" date="2004" name="Genomics">
        <title>TAFA: a novel secreted family with conserved cysteine residues and restricted expression in the brain.</title>
        <authorList>
            <person name="Tom Tang Y."/>
            <person name="Emtage P."/>
            <person name="Funk W.D."/>
            <person name="Hu T."/>
            <person name="Arterburn M."/>
            <person name="Park E.E."/>
            <person name="Rupp F."/>
        </authorList>
    </citation>
    <scope>NUCLEOTIDE SEQUENCE [MRNA] (ISOFORM 2)</scope>
    <source>
        <strain>C57BL/6J</strain>
    </source>
</reference>
<reference key="2">
    <citation type="journal article" date="2005" name="Science">
        <title>The transcriptional landscape of the mammalian genome.</title>
        <authorList>
            <person name="Carninci P."/>
            <person name="Kasukawa T."/>
            <person name="Katayama S."/>
            <person name="Gough J."/>
            <person name="Frith M.C."/>
            <person name="Maeda N."/>
            <person name="Oyama R."/>
            <person name="Ravasi T."/>
            <person name="Lenhard B."/>
            <person name="Wells C."/>
            <person name="Kodzius R."/>
            <person name="Shimokawa K."/>
            <person name="Bajic V.B."/>
            <person name="Brenner S.E."/>
            <person name="Batalov S."/>
            <person name="Forrest A.R."/>
            <person name="Zavolan M."/>
            <person name="Davis M.J."/>
            <person name="Wilming L.G."/>
            <person name="Aidinis V."/>
            <person name="Allen J.E."/>
            <person name="Ambesi-Impiombato A."/>
            <person name="Apweiler R."/>
            <person name="Aturaliya R.N."/>
            <person name="Bailey T.L."/>
            <person name="Bansal M."/>
            <person name="Baxter L."/>
            <person name="Beisel K.W."/>
            <person name="Bersano T."/>
            <person name="Bono H."/>
            <person name="Chalk A.M."/>
            <person name="Chiu K.P."/>
            <person name="Choudhary V."/>
            <person name="Christoffels A."/>
            <person name="Clutterbuck D.R."/>
            <person name="Crowe M.L."/>
            <person name="Dalla E."/>
            <person name="Dalrymple B.P."/>
            <person name="de Bono B."/>
            <person name="Della Gatta G."/>
            <person name="di Bernardo D."/>
            <person name="Down T."/>
            <person name="Engstrom P."/>
            <person name="Fagiolini M."/>
            <person name="Faulkner G."/>
            <person name="Fletcher C.F."/>
            <person name="Fukushima T."/>
            <person name="Furuno M."/>
            <person name="Futaki S."/>
            <person name="Gariboldi M."/>
            <person name="Georgii-Hemming P."/>
            <person name="Gingeras T.R."/>
            <person name="Gojobori T."/>
            <person name="Green R.E."/>
            <person name="Gustincich S."/>
            <person name="Harbers M."/>
            <person name="Hayashi Y."/>
            <person name="Hensch T.K."/>
            <person name="Hirokawa N."/>
            <person name="Hill D."/>
            <person name="Huminiecki L."/>
            <person name="Iacono M."/>
            <person name="Ikeo K."/>
            <person name="Iwama A."/>
            <person name="Ishikawa T."/>
            <person name="Jakt M."/>
            <person name="Kanapin A."/>
            <person name="Katoh M."/>
            <person name="Kawasawa Y."/>
            <person name="Kelso J."/>
            <person name="Kitamura H."/>
            <person name="Kitano H."/>
            <person name="Kollias G."/>
            <person name="Krishnan S.P."/>
            <person name="Kruger A."/>
            <person name="Kummerfeld S.K."/>
            <person name="Kurochkin I.V."/>
            <person name="Lareau L.F."/>
            <person name="Lazarevic D."/>
            <person name="Lipovich L."/>
            <person name="Liu J."/>
            <person name="Liuni S."/>
            <person name="McWilliam S."/>
            <person name="Madan Babu M."/>
            <person name="Madera M."/>
            <person name="Marchionni L."/>
            <person name="Matsuda H."/>
            <person name="Matsuzawa S."/>
            <person name="Miki H."/>
            <person name="Mignone F."/>
            <person name="Miyake S."/>
            <person name="Morris K."/>
            <person name="Mottagui-Tabar S."/>
            <person name="Mulder N."/>
            <person name="Nakano N."/>
            <person name="Nakauchi H."/>
            <person name="Ng P."/>
            <person name="Nilsson R."/>
            <person name="Nishiguchi S."/>
            <person name="Nishikawa S."/>
            <person name="Nori F."/>
            <person name="Ohara O."/>
            <person name="Okazaki Y."/>
            <person name="Orlando V."/>
            <person name="Pang K.C."/>
            <person name="Pavan W.J."/>
            <person name="Pavesi G."/>
            <person name="Pesole G."/>
            <person name="Petrovsky N."/>
            <person name="Piazza S."/>
            <person name="Reed J."/>
            <person name="Reid J.F."/>
            <person name="Ring B.Z."/>
            <person name="Ringwald M."/>
            <person name="Rost B."/>
            <person name="Ruan Y."/>
            <person name="Salzberg S.L."/>
            <person name="Sandelin A."/>
            <person name="Schneider C."/>
            <person name="Schoenbach C."/>
            <person name="Sekiguchi K."/>
            <person name="Semple C.A."/>
            <person name="Seno S."/>
            <person name="Sessa L."/>
            <person name="Sheng Y."/>
            <person name="Shibata Y."/>
            <person name="Shimada H."/>
            <person name="Shimada K."/>
            <person name="Silva D."/>
            <person name="Sinclair B."/>
            <person name="Sperling S."/>
            <person name="Stupka E."/>
            <person name="Sugiura K."/>
            <person name="Sultana R."/>
            <person name="Takenaka Y."/>
            <person name="Taki K."/>
            <person name="Tammoja K."/>
            <person name="Tan S.L."/>
            <person name="Tang S."/>
            <person name="Taylor M.S."/>
            <person name="Tegner J."/>
            <person name="Teichmann S.A."/>
            <person name="Ueda H.R."/>
            <person name="van Nimwegen E."/>
            <person name="Verardo R."/>
            <person name="Wei C.L."/>
            <person name="Yagi K."/>
            <person name="Yamanishi H."/>
            <person name="Zabarovsky E."/>
            <person name="Zhu S."/>
            <person name="Zimmer A."/>
            <person name="Hide W."/>
            <person name="Bult C."/>
            <person name="Grimmond S.M."/>
            <person name="Teasdale R.D."/>
            <person name="Liu E.T."/>
            <person name="Brusic V."/>
            <person name="Quackenbush J."/>
            <person name="Wahlestedt C."/>
            <person name="Mattick J.S."/>
            <person name="Hume D.A."/>
            <person name="Kai C."/>
            <person name="Sasaki D."/>
            <person name="Tomaru Y."/>
            <person name="Fukuda S."/>
            <person name="Kanamori-Katayama M."/>
            <person name="Suzuki M."/>
            <person name="Aoki J."/>
            <person name="Arakawa T."/>
            <person name="Iida J."/>
            <person name="Imamura K."/>
            <person name="Itoh M."/>
            <person name="Kato T."/>
            <person name="Kawaji H."/>
            <person name="Kawagashira N."/>
            <person name="Kawashima T."/>
            <person name="Kojima M."/>
            <person name="Kondo S."/>
            <person name="Konno H."/>
            <person name="Nakano K."/>
            <person name="Ninomiya N."/>
            <person name="Nishio T."/>
            <person name="Okada M."/>
            <person name="Plessy C."/>
            <person name="Shibata K."/>
            <person name="Shiraki T."/>
            <person name="Suzuki S."/>
            <person name="Tagami M."/>
            <person name="Waki K."/>
            <person name="Watahiki A."/>
            <person name="Okamura-Oho Y."/>
            <person name="Suzuki H."/>
            <person name="Kawai J."/>
            <person name="Hayashizaki Y."/>
        </authorList>
    </citation>
    <scope>NUCLEOTIDE SEQUENCE [LARGE SCALE MRNA] (ISOFORM 1)</scope>
    <source>
        <strain>C57BL/6J</strain>
        <tissue>Medulla oblongata</tissue>
    </source>
</reference>
<reference key="3">
    <citation type="journal article" date="2004" name="Genome Res.">
        <title>The status, quality, and expansion of the NIH full-length cDNA project: the Mammalian Gene Collection (MGC).</title>
        <authorList>
            <consortium name="The MGC Project Team"/>
        </authorList>
    </citation>
    <scope>NUCLEOTIDE SEQUENCE [LARGE SCALE MRNA] (ISOFORM 2)</scope>
    <source>
        <strain>FVB/N</strain>
        <tissue>Kidney</tissue>
    </source>
</reference>
<reference key="4">
    <citation type="journal article" date="2017" name="Sci. Rep.">
        <title>FAM19A5, a brain-specific chemokine, inhibits RANKL-induced osteoclast formation through formyl peptide receptor 2.</title>
        <authorList>
            <person name="Park M.Y."/>
            <person name="Kim H.S."/>
            <person name="Lee M."/>
            <person name="Park B."/>
            <person name="Lee H.Y."/>
            <person name="Cho E.B."/>
            <person name="Seong J.Y."/>
            <person name="Bae Y.S."/>
        </authorList>
    </citation>
    <scope>FUNCTION</scope>
</reference>
<reference key="5">
    <citation type="journal article" date="2018" name="Circulation">
        <title>Novel Adipokine, FAM19A5, Inhibits Neointima Formation After Injury Through Sphingosine-1-Phosphate Receptor 2.</title>
        <authorList>
            <person name="Wang Y."/>
            <person name="Chen D."/>
            <person name="Zhang Y."/>
            <person name="Wang P."/>
            <person name="Zheng C."/>
            <person name="Zhang S."/>
            <person name="Yu B."/>
            <person name="Zhang L."/>
            <person name="Zhao G."/>
            <person name="Ma B."/>
            <person name="Cai Z."/>
            <person name="Xie N."/>
            <person name="Huang S."/>
            <person name="Liu Z."/>
            <person name="Mo X."/>
            <person name="Guan Y."/>
            <person name="Wang X."/>
            <person name="Fu Y."/>
            <person name="Ma D."/>
            <person name="Wang Y."/>
            <person name="Kong W."/>
        </authorList>
    </citation>
    <scope>FUNCTION</scope>
    <scope>SUBCELLULAR LOCATION</scope>
    <scope>TISSUE SPECIFICITY</scope>
    <scope>INDUCTION</scope>
</reference>
<keyword id="KW-0025">Alternative splicing</keyword>
<keyword id="KW-0202">Cytokine</keyword>
<keyword id="KW-0325">Glycoprotein</keyword>
<keyword id="KW-1185">Reference proteome</keyword>
<keyword id="KW-0964">Secreted</keyword>
<keyword id="KW-0732">Signal</keyword>
<dbReference type="EMBL" id="AY325124">
    <property type="protein sequence ID" value="AAP92416.1"/>
    <property type="molecule type" value="mRNA"/>
</dbReference>
<dbReference type="EMBL" id="AK090194">
    <property type="protein sequence ID" value="BAC41130.1"/>
    <property type="molecule type" value="mRNA"/>
</dbReference>
<dbReference type="EMBL" id="BC015306">
    <property type="protein sequence ID" value="AAH15306.1"/>
    <property type="molecule type" value="mRNA"/>
</dbReference>
<dbReference type="CCDS" id="CCDS49693.1">
    <molecule id="Q91WE9-2"/>
</dbReference>
<dbReference type="CCDS" id="CCDS88823.1">
    <molecule id="Q91WE9-1"/>
</dbReference>
<dbReference type="RefSeq" id="NP_001239239.1">
    <molecule id="Q91WE9-1"/>
    <property type="nucleotide sequence ID" value="NM_001252310.1"/>
</dbReference>
<dbReference type="RefSeq" id="NP_598857.1">
    <molecule id="Q91WE9-2"/>
    <property type="nucleotide sequence ID" value="NM_134096.2"/>
</dbReference>
<dbReference type="BioGRID" id="222973">
    <property type="interactions" value="1"/>
</dbReference>
<dbReference type="FunCoup" id="Q91WE9">
    <property type="interactions" value="285"/>
</dbReference>
<dbReference type="STRING" id="10090.ENSMUSP00000064808"/>
<dbReference type="GlyCosmos" id="Q91WE9">
    <property type="glycosylation" value="1 site, No reported glycans"/>
</dbReference>
<dbReference type="GlyGen" id="Q91WE9">
    <property type="glycosylation" value="1 site"/>
</dbReference>
<dbReference type="PhosphoSitePlus" id="Q91WE9"/>
<dbReference type="PaxDb" id="10090-ENSMUSP00000064808"/>
<dbReference type="PeptideAtlas" id="Q91WE9"/>
<dbReference type="ProteomicsDB" id="275726">
    <molecule id="Q91WE9-1"/>
</dbReference>
<dbReference type="ProteomicsDB" id="275727">
    <molecule id="Q91WE9-2"/>
</dbReference>
<dbReference type="Antibodypedia" id="67212">
    <property type="antibodies" value="21 antibodies from 12 providers"/>
</dbReference>
<dbReference type="Ensembl" id="ENSMUST00000068088.8">
    <molecule id="Q91WE9-2"/>
    <property type="protein sequence ID" value="ENSMUSP00000064808.7"/>
    <property type="gene ID" value="ENSMUSG00000054863.10"/>
</dbReference>
<dbReference type="Ensembl" id="ENSMUST00000230414.2">
    <molecule id="Q91WE9-1"/>
    <property type="protein sequence ID" value="ENSMUSP00000155322.2"/>
    <property type="gene ID" value="ENSMUSG00000054863.10"/>
</dbReference>
<dbReference type="GeneID" id="106014"/>
<dbReference type="KEGG" id="mmu:106014"/>
<dbReference type="UCSC" id="uc007xee.1">
    <molecule id="Q91WE9-1"/>
    <property type="organism name" value="mouse"/>
</dbReference>
<dbReference type="UCSC" id="uc007xef.1">
    <molecule id="Q91WE9-2"/>
    <property type="organism name" value="mouse"/>
</dbReference>
<dbReference type="AGR" id="MGI:2146182"/>
<dbReference type="CTD" id="25817"/>
<dbReference type="MGI" id="MGI:2146182">
    <property type="gene designation" value="Tafa5"/>
</dbReference>
<dbReference type="VEuPathDB" id="HostDB:ENSMUSG00000054863"/>
<dbReference type="GeneTree" id="ENSGT00940000160682"/>
<dbReference type="HOGENOM" id="CLU_126078_5_1_1"/>
<dbReference type="InParanoid" id="Q91WE9"/>
<dbReference type="OMA" id="ARCACHK"/>
<dbReference type="OrthoDB" id="8957936at2759"/>
<dbReference type="PhylomeDB" id="Q91WE9"/>
<dbReference type="TreeFam" id="TF331749"/>
<dbReference type="BioGRID-ORCS" id="106014">
    <property type="hits" value="1 hit in 79 CRISPR screens"/>
</dbReference>
<dbReference type="ChiTaRS" id="Tafa5">
    <property type="organism name" value="mouse"/>
</dbReference>
<dbReference type="PRO" id="PR:Q91WE9"/>
<dbReference type="Proteomes" id="UP000000589">
    <property type="component" value="Chromosome 15"/>
</dbReference>
<dbReference type="RNAct" id="Q91WE9">
    <property type="molecule type" value="protein"/>
</dbReference>
<dbReference type="Bgee" id="ENSMUSG00000054863">
    <property type="expression patterns" value="Expressed in superior colliculus and 205 other cell types or tissues"/>
</dbReference>
<dbReference type="GO" id="GO:0005737">
    <property type="term" value="C:cytoplasm"/>
    <property type="evidence" value="ECO:0000314"/>
    <property type="project" value="MGI"/>
</dbReference>
<dbReference type="GO" id="GO:0005615">
    <property type="term" value="C:extracellular space"/>
    <property type="evidence" value="ECO:0000314"/>
    <property type="project" value="MGI"/>
</dbReference>
<dbReference type="GO" id="GO:0005125">
    <property type="term" value="F:cytokine activity"/>
    <property type="evidence" value="ECO:0007669"/>
    <property type="project" value="UniProtKB-KW"/>
</dbReference>
<dbReference type="GO" id="GO:0001664">
    <property type="term" value="F:G protein-coupled receptor binding"/>
    <property type="evidence" value="ECO:0000266"/>
    <property type="project" value="MGI"/>
</dbReference>
<dbReference type="GO" id="GO:0048018">
    <property type="term" value="F:receptor ligand activity"/>
    <property type="evidence" value="ECO:0000266"/>
    <property type="project" value="MGI"/>
</dbReference>
<dbReference type="GO" id="GO:0007186">
    <property type="term" value="P:G protein-coupled receptor signaling pathway"/>
    <property type="evidence" value="ECO:0000266"/>
    <property type="project" value="MGI"/>
</dbReference>
<dbReference type="GO" id="GO:1904753">
    <property type="term" value="P:negative regulation of vascular associated smooth muscle cell migration"/>
    <property type="evidence" value="ECO:0000266"/>
    <property type="project" value="MGI"/>
</dbReference>
<dbReference type="GO" id="GO:1904706">
    <property type="term" value="P:negative regulation of vascular associated smooth muscle cell proliferation"/>
    <property type="evidence" value="ECO:0000314"/>
    <property type="project" value="MGI"/>
</dbReference>
<dbReference type="GO" id="GO:0061044">
    <property type="term" value="P:negative regulation of vascular wound healing"/>
    <property type="evidence" value="ECO:0000314"/>
    <property type="project" value="MGI"/>
</dbReference>
<dbReference type="InterPro" id="IPR020350">
    <property type="entry name" value="Chemokine-like_TAFA"/>
</dbReference>
<dbReference type="InterPro" id="IPR040329">
    <property type="entry name" value="TAFA-5"/>
</dbReference>
<dbReference type="PANTHER" id="PTHR31878:SF0">
    <property type="entry name" value="CHEMOKINE-LIKE PROTEIN TAFA-5"/>
    <property type="match status" value="1"/>
</dbReference>
<dbReference type="PANTHER" id="PTHR31878">
    <property type="entry name" value="CHEMOKINE-LIKE PROTEIN TAFA-5-RELATED"/>
    <property type="match status" value="1"/>
</dbReference>
<dbReference type="Pfam" id="PF12020">
    <property type="entry name" value="TAFA"/>
    <property type="match status" value="1"/>
</dbReference>
<comment type="function">
    <text evidence="1 4 5">Acts as a chemokine-like protein by regulating cell proliferation and migration through activation of G protein-coupled receptors (GPCRs), such as S1PR2 and FPR2 (PubMed:29138422, PubMed:29453251). Stimulates chemotactic migration of macrophages mediated by the MAPK3/ERK1 and AKT1 pathway (PubMed:29138422). Blocks TNFSF11/RANKL-induced osteoclast formation from macrophages by inhibiting up-regulation of osteoclast fusogenic and differentiation genes (PubMed:29138422). Stimulation of macrophage migration and inhibition of osteoclast formation is mediated through the GPCR FPR2 (PubMed:29138422). Acts as an adipokine by negatively regulating vascular smooth muscle cell (VSMC) proliferation and migration in response to platelet-derived growth factor stimulation via GPCR S1PR2 and G protein GNA12/GNA13-transmitted RHOA signaling (By similarity). Inhibits injury-induced cell proliferation and neointima formation in the femoral arteries (PubMed:29453251).</text>
</comment>
<comment type="subcellular location">
    <subcellularLocation>
        <location evidence="5">Secreted</location>
    </subcellularLocation>
</comment>
<comment type="alternative products">
    <event type="alternative splicing"/>
    <isoform>
        <id>Q91WE9-1</id>
        <name>1</name>
        <sequence type="displayed"/>
    </isoform>
    <isoform>
        <id>Q91WE9-2</id>
        <name>2</name>
        <sequence type="described" ref="VSP_016069"/>
    </isoform>
</comment>
<comment type="tissue specificity">
    <text evidence="5">Expressed in the subcutaneous, brown, epididymal and perirenal adipose tissue (at protein level).</text>
</comment>
<comment type="induction">
    <text evidence="5">Repressed in epididymal adipose tissue of diet-induced obese mice or leptin receptor-deficient mice.</text>
</comment>
<comment type="miscellaneous">
    <molecule>Isoform 2</molecule>
    <text evidence="8">Contains a predicted signal peptide at positions 1-25.</text>
</comment>
<comment type="similarity">
    <text evidence="8">Belongs to the TAFA family.</text>
</comment>
<protein>
    <recommendedName>
        <fullName>Chemokine-like protein TAFA-5</fullName>
    </recommendedName>
</protein>
<evidence type="ECO:0000250" key="1">
    <source>
        <dbReference type="UniProtKB" id="M0R7X9"/>
    </source>
</evidence>
<evidence type="ECO:0000250" key="2">
    <source>
        <dbReference type="UniProtKB" id="Q7Z5A7"/>
    </source>
</evidence>
<evidence type="ECO:0000255" key="3">
    <source>
        <dbReference type="PROSITE-ProRule" id="PRU00498"/>
    </source>
</evidence>
<evidence type="ECO:0000269" key="4">
    <source>
    </source>
</evidence>
<evidence type="ECO:0000269" key="5">
    <source>
    </source>
</evidence>
<evidence type="ECO:0000303" key="6">
    <source>
    </source>
</evidence>
<evidence type="ECO:0000303" key="7">
    <source>
    </source>
</evidence>
<evidence type="ECO:0000305" key="8"/>
<evidence type="ECO:0000312" key="9">
    <source>
        <dbReference type="MGI" id="MGI:2146182"/>
    </source>
</evidence>
<organism>
    <name type="scientific">Mus musculus</name>
    <name type="common">Mouse</name>
    <dbReference type="NCBI Taxonomy" id="10090"/>
    <lineage>
        <taxon>Eukaryota</taxon>
        <taxon>Metazoa</taxon>
        <taxon>Chordata</taxon>
        <taxon>Craniata</taxon>
        <taxon>Vertebrata</taxon>
        <taxon>Euteleostomi</taxon>
        <taxon>Mammalia</taxon>
        <taxon>Eutheria</taxon>
        <taxon>Euarchontoglires</taxon>
        <taxon>Glires</taxon>
        <taxon>Rodentia</taxon>
        <taxon>Myomorpha</taxon>
        <taxon>Muroidea</taxon>
        <taxon>Muridae</taxon>
        <taxon>Murinae</taxon>
        <taxon>Mus</taxon>
        <taxon>Mus</taxon>
    </lineage>
</organism>
<name>TAFA5_MOUSE</name>
<accession>Q91WE9</accession>
<accession>Q8C1V6</accession>